<reference key="1">
    <citation type="journal article" date="2005" name="Science">
        <title>The transcriptional landscape of the mammalian genome.</title>
        <authorList>
            <person name="Carninci P."/>
            <person name="Kasukawa T."/>
            <person name="Katayama S."/>
            <person name="Gough J."/>
            <person name="Frith M.C."/>
            <person name="Maeda N."/>
            <person name="Oyama R."/>
            <person name="Ravasi T."/>
            <person name="Lenhard B."/>
            <person name="Wells C."/>
            <person name="Kodzius R."/>
            <person name="Shimokawa K."/>
            <person name="Bajic V.B."/>
            <person name="Brenner S.E."/>
            <person name="Batalov S."/>
            <person name="Forrest A.R."/>
            <person name="Zavolan M."/>
            <person name="Davis M.J."/>
            <person name="Wilming L.G."/>
            <person name="Aidinis V."/>
            <person name="Allen J.E."/>
            <person name="Ambesi-Impiombato A."/>
            <person name="Apweiler R."/>
            <person name="Aturaliya R.N."/>
            <person name="Bailey T.L."/>
            <person name="Bansal M."/>
            <person name="Baxter L."/>
            <person name="Beisel K.W."/>
            <person name="Bersano T."/>
            <person name="Bono H."/>
            <person name="Chalk A.M."/>
            <person name="Chiu K.P."/>
            <person name="Choudhary V."/>
            <person name="Christoffels A."/>
            <person name="Clutterbuck D.R."/>
            <person name="Crowe M.L."/>
            <person name="Dalla E."/>
            <person name="Dalrymple B.P."/>
            <person name="de Bono B."/>
            <person name="Della Gatta G."/>
            <person name="di Bernardo D."/>
            <person name="Down T."/>
            <person name="Engstrom P."/>
            <person name="Fagiolini M."/>
            <person name="Faulkner G."/>
            <person name="Fletcher C.F."/>
            <person name="Fukushima T."/>
            <person name="Furuno M."/>
            <person name="Futaki S."/>
            <person name="Gariboldi M."/>
            <person name="Georgii-Hemming P."/>
            <person name="Gingeras T.R."/>
            <person name="Gojobori T."/>
            <person name="Green R.E."/>
            <person name="Gustincich S."/>
            <person name="Harbers M."/>
            <person name="Hayashi Y."/>
            <person name="Hensch T.K."/>
            <person name="Hirokawa N."/>
            <person name="Hill D."/>
            <person name="Huminiecki L."/>
            <person name="Iacono M."/>
            <person name="Ikeo K."/>
            <person name="Iwama A."/>
            <person name="Ishikawa T."/>
            <person name="Jakt M."/>
            <person name="Kanapin A."/>
            <person name="Katoh M."/>
            <person name="Kawasawa Y."/>
            <person name="Kelso J."/>
            <person name="Kitamura H."/>
            <person name="Kitano H."/>
            <person name="Kollias G."/>
            <person name="Krishnan S.P."/>
            <person name="Kruger A."/>
            <person name="Kummerfeld S.K."/>
            <person name="Kurochkin I.V."/>
            <person name="Lareau L.F."/>
            <person name="Lazarevic D."/>
            <person name="Lipovich L."/>
            <person name="Liu J."/>
            <person name="Liuni S."/>
            <person name="McWilliam S."/>
            <person name="Madan Babu M."/>
            <person name="Madera M."/>
            <person name="Marchionni L."/>
            <person name="Matsuda H."/>
            <person name="Matsuzawa S."/>
            <person name="Miki H."/>
            <person name="Mignone F."/>
            <person name="Miyake S."/>
            <person name="Morris K."/>
            <person name="Mottagui-Tabar S."/>
            <person name="Mulder N."/>
            <person name="Nakano N."/>
            <person name="Nakauchi H."/>
            <person name="Ng P."/>
            <person name="Nilsson R."/>
            <person name="Nishiguchi S."/>
            <person name="Nishikawa S."/>
            <person name="Nori F."/>
            <person name="Ohara O."/>
            <person name="Okazaki Y."/>
            <person name="Orlando V."/>
            <person name="Pang K.C."/>
            <person name="Pavan W.J."/>
            <person name="Pavesi G."/>
            <person name="Pesole G."/>
            <person name="Petrovsky N."/>
            <person name="Piazza S."/>
            <person name="Reed J."/>
            <person name="Reid J.F."/>
            <person name="Ring B.Z."/>
            <person name="Ringwald M."/>
            <person name="Rost B."/>
            <person name="Ruan Y."/>
            <person name="Salzberg S.L."/>
            <person name="Sandelin A."/>
            <person name="Schneider C."/>
            <person name="Schoenbach C."/>
            <person name="Sekiguchi K."/>
            <person name="Semple C.A."/>
            <person name="Seno S."/>
            <person name="Sessa L."/>
            <person name="Sheng Y."/>
            <person name="Shibata Y."/>
            <person name="Shimada H."/>
            <person name="Shimada K."/>
            <person name="Silva D."/>
            <person name="Sinclair B."/>
            <person name="Sperling S."/>
            <person name="Stupka E."/>
            <person name="Sugiura K."/>
            <person name="Sultana R."/>
            <person name="Takenaka Y."/>
            <person name="Taki K."/>
            <person name="Tammoja K."/>
            <person name="Tan S.L."/>
            <person name="Tang S."/>
            <person name="Taylor M.S."/>
            <person name="Tegner J."/>
            <person name="Teichmann S.A."/>
            <person name="Ueda H.R."/>
            <person name="van Nimwegen E."/>
            <person name="Verardo R."/>
            <person name="Wei C.L."/>
            <person name="Yagi K."/>
            <person name="Yamanishi H."/>
            <person name="Zabarovsky E."/>
            <person name="Zhu S."/>
            <person name="Zimmer A."/>
            <person name="Hide W."/>
            <person name="Bult C."/>
            <person name="Grimmond S.M."/>
            <person name="Teasdale R.D."/>
            <person name="Liu E.T."/>
            <person name="Brusic V."/>
            <person name="Quackenbush J."/>
            <person name="Wahlestedt C."/>
            <person name="Mattick J.S."/>
            <person name="Hume D.A."/>
            <person name="Kai C."/>
            <person name="Sasaki D."/>
            <person name="Tomaru Y."/>
            <person name="Fukuda S."/>
            <person name="Kanamori-Katayama M."/>
            <person name="Suzuki M."/>
            <person name="Aoki J."/>
            <person name="Arakawa T."/>
            <person name="Iida J."/>
            <person name="Imamura K."/>
            <person name="Itoh M."/>
            <person name="Kato T."/>
            <person name="Kawaji H."/>
            <person name="Kawagashira N."/>
            <person name="Kawashima T."/>
            <person name="Kojima M."/>
            <person name="Kondo S."/>
            <person name="Konno H."/>
            <person name="Nakano K."/>
            <person name="Ninomiya N."/>
            <person name="Nishio T."/>
            <person name="Okada M."/>
            <person name="Plessy C."/>
            <person name="Shibata K."/>
            <person name="Shiraki T."/>
            <person name="Suzuki S."/>
            <person name="Tagami M."/>
            <person name="Waki K."/>
            <person name="Watahiki A."/>
            <person name="Okamura-Oho Y."/>
            <person name="Suzuki H."/>
            <person name="Kawai J."/>
            <person name="Hayashizaki Y."/>
        </authorList>
    </citation>
    <scope>NUCLEOTIDE SEQUENCE [LARGE SCALE MRNA]</scope>
    <source>
        <strain>C57BL/6J</strain>
        <strain>NOD</strain>
        <tissue>Thymus</tissue>
    </source>
</reference>
<reference key="2">
    <citation type="journal article" date="2004" name="Genome Res.">
        <title>The status, quality, and expansion of the NIH full-length cDNA project: the Mammalian Gene Collection (MGC).</title>
        <authorList>
            <consortium name="The MGC Project Team"/>
        </authorList>
    </citation>
    <scope>NUCLEOTIDE SEQUENCE [LARGE SCALE MRNA]</scope>
    <source>
        <strain>Czech II</strain>
        <tissue>Mammary tumor</tissue>
    </source>
</reference>
<reference key="3">
    <citation type="journal article" date="2013" name="Proc. Natl. Acad. Sci. U.S.A.">
        <title>GPR171 is a hypothalamic G protein-coupled receptor for BigLEN, a neuropeptide involved in feeding.</title>
        <authorList>
            <person name="Gomes I."/>
            <person name="Aryal D.K."/>
            <person name="Wardman J.H."/>
            <person name="Gupta A."/>
            <person name="Gagnidze K."/>
            <person name="Rodriguiz R.M."/>
            <person name="Kumar S."/>
            <person name="Wetsel W.C."/>
            <person name="Pintar J.E."/>
            <person name="Fricker L.D."/>
            <person name="Devi L.A."/>
        </authorList>
    </citation>
    <scope>FUNCTION</scope>
    <scope>LIGAND-BINDING</scope>
    <scope>TISSUE SPECIFICITY</scope>
    <scope>SUBCELLULAR LOCATION</scope>
</reference>
<reference key="4">
    <citation type="journal article" date="2016" name="Sci. Signal.">
        <title>Identification of GPR83 as the receptor for the neuroendocrine peptide PEN.</title>
        <authorList>
            <person name="Gomes I."/>
            <person name="Bobeck E.N."/>
            <person name="Margolis E.B."/>
            <person name="Gupta A."/>
            <person name="Sierra S."/>
            <person name="Fakira A.K."/>
            <person name="Fujita W."/>
            <person name="Mueller T.D."/>
            <person name="Mueller A."/>
            <person name="Tschoep M.H."/>
            <person name="Kleinau G."/>
            <person name="Fricker L.D."/>
            <person name="Devi L.A."/>
        </authorList>
    </citation>
    <scope>SUBCELLULAR LOCATION</scope>
</reference>
<reference key="5">
    <citation type="journal article" date="2017" name="Neuropsychopharmacology">
        <title>The BigLEN-GPR171 peptide receptor system within the basolateral amygdala regulates anxiety-like behavior and contextual fear conditioning.</title>
        <authorList>
            <person name="Bobeck E.N."/>
            <person name="Gomes I."/>
            <person name="Pena D."/>
            <person name="Cummings K.A."/>
            <person name="Clem R.L."/>
            <person name="Mezei M."/>
            <person name="Devi L.A."/>
        </authorList>
    </citation>
    <scope>FUNCTION</scope>
    <scope>SUBCELLULAR LOCATION</scope>
    <scope>LIGAND-BINDING</scope>
</reference>
<reference key="6">
    <citation type="journal article" date="2019" name="J. Pharmacol. Exp. Ther.">
        <title>Opioid-induced signaling and antinociception are modulated by the recently deorphanized receptor, GPR171.</title>
        <authorList>
            <person name="McDermott M.V."/>
            <person name="Afrose L."/>
            <person name="Gomes I."/>
            <person name="Devi L.A."/>
            <person name="Bobeck E.N."/>
        </authorList>
    </citation>
    <scope>TISSUE SPECIFICITY</scope>
    <scope>FUNCTION</scope>
</reference>
<reference key="7">
    <citation type="journal article" date="2021" name="Nat. Commun.">
        <title>The GPR171 pathway suppresses T cell activation and limits antitumor immunity.</title>
        <authorList>
            <person name="Fujiwara Y."/>
            <person name="Torphy R.J."/>
            <person name="Sun Y."/>
            <person name="Miller E.N."/>
            <person name="Ho F."/>
            <person name="Borcherding N."/>
            <person name="Wu T."/>
            <person name="Torres R.M."/>
            <person name="Zhang W."/>
            <person name="Schulick R.D."/>
            <person name="Zhu Y."/>
        </authorList>
    </citation>
    <scope>FUNCTION</scope>
    <scope>TISSUE SPECIFICITY</scope>
    <scope>INDUCTION</scope>
    <scope>DISRUPTION PHENOTYPE</scope>
</reference>
<keyword id="KW-1003">Cell membrane</keyword>
<keyword id="KW-0297">G-protein coupled receptor</keyword>
<keyword id="KW-0325">Glycoprotein</keyword>
<keyword id="KW-0472">Membrane</keyword>
<keyword id="KW-0675">Receptor</keyword>
<keyword id="KW-1185">Reference proteome</keyword>
<keyword id="KW-0807">Transducer</keyword>
<keyword id="KW-0812">Transmembrane</keyword>
<keyword id="KW-1133">Transmembrane helix</keyword>
<dbReference type="EMBL" id="AK041381">
    <property type="protein sequence ID" value="BAC30925.1"/>
    <property type="molecule type" value="mRNA"/>
</dbReference>
<dbReference type="EMBL" id="AK041582">
    <property type="protein sequence ID" value="BAC30993.1"/>
    <property type="molecule type" value="mRNA"/>
</dbReference>
<dbReference type="EMBL" id="AK089252">
    <property type="protein sequence ID" value="BAC40815.1"/>
    <property type="molecule type" value="mRNA"/>
</dbReference>
<dbReference type="EMBL" id="AK089287">
    <property type="protein sequence ID" value="BAC40829.1"/>
    <property type="molecule type" value="mRNA"/>
</dbReference>
<dbReference type="EMBL" id="AK154725">
    <property type="protein sequence ID" value="BAE32789.1"/>
    <property type="molecule type" value="mRNA"/>
</dbReference>
<dbReference type="EMBL" id="BC024054">
    <property type="protein sequence ID" value="AAH24054.1"/>
    <property type="molecule type" value="mRNA"/>
</dbReference>
<dbReference type="CCDS" id="CCDS17370.1"/>
<dbReference type="RefSeq" id="NP_775574.1">
    <property type="nucleotide sequence ID" value="NM_173398.3"/>
</dbReference>
<dbReference type="SMR" id="Q8BG55"/>
<dbReference type="FunCoup" id="Q8BG55">
    <property type="interactions" value="990"/>
</dbReference>
<dbReference type="STRING" id="10090.ENSMUSP00000082115"/>
<dbReference type="GlyCosmos" id="Q8BG55">
    <property type="glycosylation" value="1 site, No reported glycans"/>
</dbReference>
<dbReference type="GlyGen" id="Q8BG55">
    <property type="glycosylation" value="1 site"/>
</dbReference>
<dbReference type="iPTMnet" id="Q8BG55"/>
<dbReference type="PhosphoSitePlus" id="Q8BG55"/>
<dbReference type="PaxDb" id="10090-ENSMUSP00000082115"/>
<dbReference type="ProteomicsDB" id="267749"/>
<dbReference type="Antibodypedia" id="18294">
    <property type="antibodies" value="313 antibodies from 31 providers"/>
</dbReference>
<dbReference type="DNASU" id="229323"/>
<dbReference type="Ensembl" id="ENSMUST00000085040.5">
    <property type="protein sequence ID" value="ENSMUSP00000082115.5"/>
    <property type="gene ID" value="ENSMUSG00000050075.9"/>
</dbReference>
<dbReference type="GeneID" id="229323"/>
<dbReference type="KEGG" id="mmu:229323"/>
<dbReference type="UCSC" id="uc008pij.2">
    <property type="organism name" value="mouse"/>
</dbReference>
<dbReference type="AGR" id="MGI:2442043"/>
<dbReference type="CTD" id="29909"/>
<dbReference type="MGI" id="MGI:2442043">
    <property type="gene designation" value="Gpr171"/>
</dbReference>
<dbReference type="VEuPathDB" id="HostDB:ENSMUSG00000050075"/>
<dbReference type="eggNOG" id="ENOG502QTCA">
    <property type="taxonomic scope" value="Eukaryota"/>
</dbReference>
<dbReference type="GeneTree" id="ENSGT01110000267167"/>
<dbReference type="HOGENOM" id="CLU_009579_8_2_1"/>
<dbReference type="InParanoid" id="Q8BG55"/>
<dbReference type="OMA" id="EPFTYFY"/>
<dbReference type="OrthoDB" id="9935079at2759"/>
<dbReference type="PhylomeDB" id="Q8BG55"/>
<dbReference type="TreeFam" id="TF330969"/>
<dbReference type="BioGRID-ORCS" id="229323">
    <property type="hits" value="3 hits in 76 CRISPR screens"/>
</dbReference>
<dbReference type="PRO" id="PR:Q8BG55"/>
<dbReference type="Proteomes" id="UP000000589">
    <property type="component" value="Chromosome 3"/>
</dbReference>
<dbReference type="RNAct" id="Q8BG55">
    <property type="molecule type" value="protein"/>
</dbReference>
<dbReference type="Bgee" id="ENSMUSG00000050075">
    <property type="expression patterns" value="Expressed in peripheral lymph node and 57 other cell types or tissues"/>
</dbReference>
<dbReference type="GO" id="GO:0005886">
    <property type="term" value="C:plasma membrane"/>
    <property type="evidence" value="ECO:0000314"/>
    <property type="project" value="UniProtKB"/>
</dbReference>
<dbReference type="GO" id="GO:0008528">
    <property type="term" value="F:G protein-coupled peptide receptor activity"/>
    <property type="evidence" value="ECO:0000314"/>
    <property type="project" value="UniProtKB"/>
</dbReference>
<dbReference type="GO" id="GO:0042923">
    <property type="term" value="F:neuropeptide binding"/>
    <property type="evidence" value="ECO:0000314"/>
    <property type="project" value="UniProtKB"/>
</dbReference>
<dbReference type="GO" id="GO:0008188">
    <property type="term" value="F:neuropeptide receptor activity"/>
    <property type="evidence" value="ECO:0000314"/>
    <property type="project" value="UniProtKB"/>
</dbReference>
<dbReference type="GO" id="GO:0007188">
    <property type="term" value="P:adenylate cyclase-modulating G protein-coupled receptor signaling pathway"/>
    <property type="evidence" value="ECO:0000315"/>
    <property type="project" value="UniProtKB"/>
</dbReference>
<dbReference type="GO" id="GO:0007186">
    <property type="term" value="P:G protein-coupled receptor signaling pathway"/>
    <property type="evidence" value="ECO:0000314"/>
    <property type="project" value="UniProtKB"/>
</dbReference>
<dbReference type="GO" id="GO:0045638">
    <property type="term" value="P:negative regulation of myeloid cell differentiation"/>
    <property type="evidence" value="ECO:0000314"/>
    <property type="project" value="MGI"/>
</dbReference>
<dbReference type="GO" id="GO:0060259">
    <property type="term" value="P:regulation of feeding behavior"/>
    <property type="evidence" value="ECO:0000315"/>
    <property type="project" value="UniProtKB"/>
</dbReference>
<dbReference type="GO" id="GO:0051930">
    <property type="term" value="P:regulation of sensory perception of pain"/>
    <property type="evidence" value="ECO:0000315"/>
    <property type="project" value="UniProtKB"/>
</dbReference>
<dbReference type="CDD" id="cd15167">
    <property type="entry name" value="7tmA_GPR171"/>
    <property type="match status" value="1"/>
</dbReference>
<dbReference type="FunFam" id="1.20.1070.10:FF:000206">
    <property type="entry name" value="Probable G-protein coupled receptor 171"/>
    <property type="match status" value="1"/>
</dbReference>
<dbReference type="Gene3D" id="1.20.1070.10">
    <property type="entry name" value="Rhodopsin 7-helix transmembrane proteins"/>
    <property type="match status" value="1"/>
</dbReference>
<dbReference type="InterPro" id="IPR000276">
    <property type="entry name" value="GPCR_Rhodpsn"/>
</dbReference>
<dbReference type="InterPro" id="IPR017452">
    <property type="entry name" value="GPCR_Rhodpsn_7TM"/>
</dbReference>
<dbReference type="InterPro" id="IPR048077">
    <property type="entry name" value="GPR171"/>
</dbReference>
<dbReference type="PANTHER" id="PTHR24233:SF4">
    <property type="entry name" value="G-PROTEIN COUPLED RECEPTOR 171"/>
    <property type="match status" value="1"/>
</dbReference>
<dbReference type="PANTHER" id="PTHR24233">
    <property type="entry name" value="P2Y PURINOCEPTOR-RELATED G-PROTEIN COUPLED RECEPTOR"/>
    <property type="match status" value="1"/>
</dbReference>
<dbReference type="Pfam" id="PF00001">
    <property type="entry name" value="7tm_1"/>
    <property type="match status" value="1"/>
</dbReference>
<dbReference type="PRINTS" id="PR00237">
    <property type="entry name" value="GPCRRHODOPSN"/>
</dbReference>
<dbReference type="PRINTS" id="PR01157">
    <property type="entry name" value="P2YPURNOCPTR"/>
</dbReference>
<dbReference type="SUPFAM" id="SSF81321">
    <property type="entry name" value="Family A G protein-coupled receptor-like"/>
    <property type="match status" value="1"/>
</dbReference>
<dbReference type="PROSITE" id="PS00237">
    <property type="entry name" value="G_PROTEIN_RECEP_F1_1"/>
    <property type="match status" value="1"/>
</dbReference>
<dbReference type="PROSITE" id="PS50262">
    <property type="entry name" value="G_PROTEIN_RECEP_F1_2"/>
    <property type="match status" value="1"/>
</dbReference>
<name>GP171_MOUSE</name>
<sequence>MTNSSTFCPVYRDLEPFTYFFYLVFLIGIIGSCFATWAFIQKTTNHRCVSIYLINLLTADFLLTLALPVKIIVDLGVAPWKLRIFHCQVTACLIYINMYLSIIFLAFVSIDRCLQLIHSCKIYRIQEPGFAKMISAVVWLMVLLIMVPNMVIPIKDIKEKSNVGCMEFKKEFGRNWHLLTNFICVAIFLNFSVIILISNFLAIRQLYRNRDNTNYPSVKSALLHILLVTASYIICFVPYHAVRIPYTLSQTEVISDCSTRIALFKAKEATLLLAVSNLCFDPILYYHLSKAFRLKVTETFASPKKSKPLEERLRSENDV</sequence>
<protein>
    <recommendedName>
        <fullName>G-protein coupled receptor 171</fullName>
    </recommendedName>
</protein>
<accession>Q8BG55</accession>
<accession>Q8BTN1</accession>
<accession>Q8BY85</accession>
<accession>Q8CIF3</accession>
<comment type="function">
    <text evidence="3 5 6 7">G-protein coupled receptor for Big LEN, a 16-amino acid neuropeptide produced from the precursor protein, proSAAS (encoded by PCSK1N) (PubMed:24043826, PubMed:28425495). Acts through a G(i)-alpha-mediated pathway in response to Big LEN (PubMed:24043826). Big LEN-GPR171 system plays an important role in regulating feeding and metabolism (PubMed:24043826). Also plays a role in modulating fear and anxiety-like behaviors in the basolateral amygdala (PubMed:28425495). Big LEN-GPR171 modulates the mu-type opioid receptor signaling and antinociception (PubMed:31308196). Acts as a negative regulator T cell function (PubMed:34615877).</text>
</comment>
<comment type="subcellular location">
    <subcellularLocation>
        <location evidence="3 5">Cell membrane</location>
        <topology evidence="1">Multi-pass membrane protein</topology>
    </subcellularLocation>
    <text evidence="4">Colocalized with GPR83 in the paraventricular nucleus.</text>
</comment>
<comment type="tissue specificity">
    <text evidence="3 6 7">Highly expressed in hypothalamus, including the arcuate nucleus, paraventricular nucleus and dorsomedial hypothalamus (PubMed:24043826). Expressed in periaqueductal gray (at protein level), found primarily in GABAergic neurons and to a lesser extent in glutamatergic neurons (PubMed:31308196). Expressed in T cells and natural killer cells (PubMed:34615877).</text>
</comment>
<comment type="induction">
    <text evidence="7">Induced upon antigen stimulation.</text>
</comment>
<comment type="disruption phenotype">
    <text evidence="7">Deficient mice exhibit stronger antitumor immunity.</text>
</comment>
<comment type="similarity">
    <text evidence="2">Belongs to the G-protein coupled receptor 1 family.</text>
</comment>
<feature type="chain" id="PRO_0000303237" description="G-protein coupled receptor 171">
    <location>
        <begin position="1"/>
        <end position="319"/>
    </location>
</feature>
<feature type="topological domain" description="Extracellular" evidence="1">
    <location>
        <begin position="1"/>
        <end position="21"/>
    </location>
</feature>
<feature type="transmembrane region" description="Helical; Name=1" evidence="1">
    <location>
        <begin position="22"/>
        <end position="42"/>
    </location>
</feature>
<feature type="topological domain" description="Cytoplasmic" evidence="1">
    <location>
        <begin position="43"/>
        <end position="48"/>
    </location>
</feature>
<feature type="transmembrane region" description="Helical; Name=2" evidence="1">
    <location>
        <begin position="49"/>
        <end position="69"/>
    </location>
</feature>
<feature type="topological domain" description="Extracellular" evidence="1">
    <location>
        <begin position="70"/>
        <end position="89"/>
    </location>
</feature>
<feature type="transmembrane region" description="Helical; Name=3" evidence="1">
    <location>
        <begin position="90"/>
        <end position="110"/>
    </location>
</feature>
<feature type="topological domain" description="Cytoplasmic" evidence="1">
    <location>
        <begin position="111"/>
        <end position="132"/>
    </location>
</feature>
<feature type="transmembrane region" description="Helical; Name=4" evidence="1">
    <location>
        <begin position="133"/>
        <end position="153"/>
    </location>
</feature>
<feature type="topological domain" description="Extracellular" evidence="1">
    <location>
        <begin position="154"/>
        <end position="181"/>
    </location>
</feature>
<feature type="transmembrane region" description="Helical; Name=5" evidence="1">
    <location>
        <begin position="182"/>
        <end position="202"/>
    </location>
</feature>
<feature type="topological domain" description="Cytoplasmic" evidence="1">
    <location>
        <begin position="203"/>
        <end position="224"/>
    </location>
</feature>
<feature type="transmembrane region" description="Helical; Name=6" evidence="1">
    <location>
        <begin position="225"/>
        <end position="245"/>
    </location>
</feature>
<feature type="topological domain" description="Extracellular" evidence="1">
    <location>
        <begin position="246"/>
        <end position="268"/>
    </location>
</feature>
<feature type="transmembrane region" description="Helical; Name=7" evidence="1">
    <location>
        <begin position="269"/>
        <end position="289"/>
    </location>
</feature>
<feature type="topological domain" description="Cytoplasmic" evidence="1">
    <location>
        <begin position="290"/>
        <end position="319"/>
    </location>
</feature>
<feature type="glycosylation site" description="N-linked (GlcNAc...) asparagine" evidence="1">
    <location>
        <position position="3"/>
    </location>
</feature>
<feature type="sequence conflict" description="In Ref. 1; BAC40815." evidence="8" ref="1">
    <location>
        <begin position="40"/>
        <end position="41"/>
    </location>
</feature>
<feature type="sequence conflict" description="In Ref. 2; AAH24054." evidence="8" ref="2">
    <original>I</original>
    <variation>V</variation>
    <location>
        <position position="72"/>
    </location>
</feature>
<feature type="sequence conflict" description="In Ref. 1; BAC40815." evidence="8" ref="1">
    <original>V</original>
    <variation>A</variation>
    <location>
        <position position="151"/>
    </location>
</feature>
<feature type="sequence conflict" description="In Ref. 1; BAC30993." evidence="8" ref="1">
    <original>S</original>
    <variation>T</variation>
    <location>
        <position position="258"/>
    </location>
</feature>
<gene>
    <name type="primary">Gpr171</name>
</gene>
<proteinExistence type="evidence at protein level"/>
<evidence type="ECO:0000255" key="1"/>
<evidence type="ECO:0000255" key="2">
    <source>
        <dbReference type="PROSITE-ProRule" id="PRU00521"/>
    </source>
</evidence>
<evidence type="ECO:0000269" key="3">
    <source>
    </source>
</evidence>
<evidence type="ECO:0000269" key="4">
    <source>
    </source>
</evidence>
<evidence type="ECO:0000269" key="5">
    <source>
    </source>
</evidence>
<evidence type="ECO:0000269" key="6">
    <source>
    </source>
</evidence>
<evidence type="ECO:0000269" key="7">
    <source>
    </source>
</evidence>
<evidence type="ECO:0000305" key="8"/>
<organism>
    <name type="scientific">Mus musculus</name>
    <name type="common">Mouse</name>
    <dbReference type="NCBI Taxonomy" id="10090"/>
    <lineage>
        <taxon>Eukaryota</taxon>
        <taxon>Metazoa</taxon>
        <taxon>Chordata</taxon>
        <taxon>Craniata</taxon>
        <taxon>Vertebrata</taxon>
        <taxon>Euteleostomi</taxon>
        <taxon>Mammalia</taxon>
        <taxon>Eutheria</taxon>
        <taxon>Euarchontoglires</taxon>
        <taxon>Glires</taxon>
        <taxon>Rodentia</taxon>
        <taxon>Myomorpha</taxon>
        <taxon>Muroidea</taxon>
        <taxon>Muridae</taxon>
        <taxon>Murinae</taxon>
        <taxon>Mus</taxon>
        <taxon>Mus</taxon>
    </lineage>
</organism>